<accession>Q92I35</accession>
<organism>
    <name type="scientific">Rickettsia conorii (strain ATCC VR-613 / Malish 7)</name>
    <dbReference type="NCBI Taxonomy" id="272944"/>
    <lineage>
        <taxon>Bacteria</taxon>
        <taxon>Pseudomonadati</taxon>
        <taxon>Pseudomonadota</taxon>
        <taxon>Alphaproteobacteria</taxon>
        <taxon>Rickettsiales</taxon>
        <taxon>Rickettsiaceae</taxon>
        <taxon>Rickettsieae</taxon>
        <taxon>Rickettsia</taxon>
        <taxon>spotted fever group</taxon>
    </lineage>
</organism>
<name>SYL_RICCN</name>
<dbReference type="EC" id="6.1.1.4" evidence="1"/>
<dbReference type="EMBL" id="AE006914">
    <property type="protein sequence ID" value="AAL03123.1"/>
    <property type="molecule type" value="Genomic_DNA"/>
</dbReference>
<dbReference type="PIR" id="A97773">
    <property type="entry name" value="A97773"/>
</dbReference>
<dbReference type="RefSeq" id="WP_010977219.1">
    <property type="nucleotide sequence ID" value="NC_003103.1"/>
</dbReference>
<dbReference type="SMR" id="Q92I35"/>
<dbReference type="GeneID" id="928773"/>
<dbReference type="KEGG" id="rco:RC0585"/>
<dbReference type="PATRIC" id="fig|272944.4.peg.670"/>
<dbReference type="HOGENOM" id="CLU_004427_0_0_5"/>
<dbReference type="Proteomes" id="UP000000816">
    <property type="component" value="Chromosome"/>
</dbReference>
<dbReference type="GO" id="GO:0005737">
    <property type="term" value="C:cytoplasm"/>
    <property type="evidence" value="ECO:0007669"/>
    <property type="project" value="UniProtKB-SubCell"/>
</dbReference>
<dbReference type="GO" id="GO:0002161">
    <property type="term" value="F:aminoacyl-tRNA deacylase activity"/>
    <property type="evidence" value="ECO:0007669"/>
    <property type="project" value="InterPro"/>
</dbReference>
<dbReference type="GO" id="GO:0005524">
    <property type="term" value="F:ATP binding"/>
    <property type="evidence" value="ECO:0007669"/>
    <property type="project" value="UniProtKB-UniRule"/>
</dbReference>
<dbReference type="GO" id="GO:0004823">
    <property type="term" value="F:leucine-tRNA ligase activity"/>
    <property type="evidence" value="ECO:0007669"/>
    <property type="project" value="UniProtKB-UniRule"/>
</dbReference>
<dbReference type="GO" id="GO:0006429">
    <property type="term" value="P:leucyl-tRNA aminoacylation"/>
    <property type="evidence" value="ECO:0007669"/>
    <property type="project" value="UniProtKB-UniRule"/>
</dbReference>
<dbReference type="CDD" id="cd07958">
    <property type="entry name" value="Anticodon_Ia_Leu_BEm"/>
    <property type="match status" value="1"/>
</dbReference>
<dbReference type="CDD" id="cd00812">
    <property type="entry name" value="LeuRS_core"/>
    <property type="match status" value="1"/>
</dbReference>
<dbReference type="FunFam" id="1.10.730.10:FF:000081">
    <property type="entry name" value="Leucine--tRNA ligase"/>
    <property type="match status" value="1"/>
</dbReference>
<dbReference type="FunFam" id="3.10.20.590:FF:000001">
    <property type="entry name" value="Leucine--tRNA ligase"/>
    <property type="match status" value="1"/>
</dbReference>
<dbReference type="FunFam" id="3.40.50.620:FF:000003">
    <property type="entry name" value="Leucine--tRNA ligase"/>
    <property type="match status" value="1"/>
</dbReference>
<dbReference type="FunFam" id="3.40.50.620:FF:000051">
    <property type="entry name" value="Leucine--tRNA ligase"/>
    <property type="match status" value="1"/>
</dbReference>
<dbReference type="Gene3D" id="2.20.28.290">
    <property type="match status" value="1"/>
</dbReference>
<dbReference type="Gene3D" id="3.10.20.590">
    <property type="match status" value="1"/>
</dbReference>
<dbReference type="Gene3D" id="3.40.50.620">
    <property type="entry name" value="HUPs"/>
    <property type="match status" value="2"/>
</dbReference>
<dbReference type="Gene3D" id="1.10.730.10">
    <property type="entry name" value="Isoleucyl-tRNA Synthetase, Domain 1"/>
    <property type="match status" value="1"/>
</dbReference>
<dbReference type="HAMAP" id="MF_00049_B">
    <property type="entry name" value="Leu_tRNA_synth_B"/>
    <property type="match status" value="1"/>
</dbReference>
<dbReference type="InterPro" id="IPR001412">
    <property type="entry name" value="aa-tRNA-synth_I_CS"/>
</dbReference>
<dbReference type="InterPro" id="IPR002300">
    <property type="entry name" value="aa-tRNA-synth_Ia"/>
</dbReference>
<dbReference type="InterPro" id="IPR002302">
    <property type="entry name" value="Leu-tRNA-ligase"/>
</dbReference>
<dbReference type="InterPro" id="IPR025709">
    <property type="entry name" value="Leu_tRNA-synth_edit"/>
</dbReference>
<dbReference type="InterPro" id="IPR013155">
    <property type="entry name" value="M/V/L/I-tRNA-synth_anticd-bd"/>
</dbReference>
<dbReference type="InterPro" id="IPR015413">
    <property type="entry name" value="Methionyl/Leucyl_tRNA_Synth"/>
</dbReference>
<dbReference type="InterPro" id="IPR014729">
    <property type="entry name" value="Rossmann-like_a/b/a_fold"/>
</dbReference>
<dbReference type="InterPro" id="IPR009080">
    <property type="entry name" value="tRNAsynth_Ia_anticodon-bd"/>
</dbReference>
<dbReference type="InterPro" id="IPR009008">
    <property type="entry name" value="Val/Leu/Ile-tRNA-synth_edit"/>
</dbReference>
<dbReference type="NCBIfam" id="TIGR00396">
    <property type="entry name" value="leuS_bact"/>
    <property type="match status" value="1"/>
</dbReference>
<dbReference type="PANTHER" id="PTHR43740:SF2">
    <property type="entry name" value="LEUCINE--TRNA LIGASE, MITOCHONDRIAL"/>
    <property type="match status" value="1"/>
</dbReference>
<dbReference type="PANTHER" id="PTHR43740">
    <property type="entry name" value="LEUCYL-TRNA SYNTHETASE"/>
    <property type="match status" value="1"/>
</dbReference>
<dbReference type="Pfam" id="PF08264">
    <property type="entry name" value="Anticodon_1"/>
    <property type="match status" value="1"/>
</dbReference>
<dbReference type="Pfam" id="PF00133">
    <property type="entry name" value="tRNA-synt_1"/>
    <property type="match status" value="2"/>
</dbReference>
<dbReference type="Pfam" id="PF13603">
    <property type="entry name" value="tRNA-synt_1_2"/>
    <property type="match status" value="1"/>
</dbReference>
<dbReference type="Pfam" id="PF09334">
    <property type="entry name" value="tRNA-synt_1g"/>
    <property type="match status" value="1"/>
</dbReference>
<dbReference type="PRINTS" id="PR00985">
    <property type="entry name" value="TRNASYNTHLEU"/>
</dbReference>
<dbReference type="SUPFAM" id="SSF47323">
    <property type="entry name" value="Anticodon-binding domain of a subclass of class I aminoacyl-tRNA synthetases"/>
    <property type="match status" value="1"/>
</dbReference>
<dbReference type="SUPFAM" id="SSF52374">
    <property type="entry name" value="Nucleotidylyl transferase"/>
    <property type="match status" value="1"/>
</dbReference>
<dbReference type="SUPFAM" id="SSF50677">
    <property type="entry name" value="ValRS/IleRS/LeuRS editing domain"/>
    <property type="match status" value="1"/>
</dbReference>
<dbReference type="PROSITE" id="PS00178">
    <property type="entry name" value="AA_TRNA_LIGASE_I"/>
    <property type="match status" value="1"/>
</dbReference>
<evidence type="ECO:0000255" key="1">
    <source>
        <dbReference type="HAMAP-Rule" id="MF_00049"/>
    </source>
</evidence>
<sequence length="835" mass="96589">MNQIEQKWQYIWQEEKAFEVSNASSKPKYYVLEMLPYPSGKIHVGHVRNYSIGDVIARFMTMQGFNVLHPMGWDAFGLPAENAAIKNNSHPKKWTYSNIKNMKKQLKSMGFSYDWSREINSCDPEYYKHEQKFFLELYERNLAYQKESFVNWDPVDNTVLANEQVVDGRGWRSGAIVVKRYLKQWFLKITDYAEELLNEIQNLKEWPEAVRSMQEKWIGKSIGANFHFKIKDNEETTIEVFSTKPETIFGASFIGIAFNHPIIERLVSKTPEILAFITQCSHITRSSELEKAEKEGVFTGLFVTHPFDSNIVLPVIITNFVLMDYGTGAIFGCPAHDECDHELAVKMNLSIKQVIKADMDVQKTAYTEDGILINSDFLNGLTSNEAKQEVIGEFEKLGIGKRSVNYRLKDWGISRQRFWGCPIPMIHCEICGIVPVPYKDLPVTLPDDVNFDGHGNPLDHHPSWKHVNCPKCDKPAVRETDTFDTFFESSWYFTRYCNSNATEMTDKKACDYWLPVDKYIGGIEHAVMHLLYARFFTKVMNEQNYVSVREPFKGLFTQGMVLHATYKDEHNNWLYPEEVVKKGNEFFHKESNNRVVQGRIEKMSKSKKNLIDLETMQEQYGADAIRLFVLSDSPPEKDLEWSASGIEGCSRFINKLEYMFKAIDSLKDDVNSEVNKELNRLVHFTIKHVAEDIKHFALNRAIARMRELSNAISAEISKDKIDVKTVRHGFNVLVQLLNPFIPHITEEIWQKLGNKERLYNLSFPAFDESMLELDTYIMAVQVNGKLRDTYEFKTSVSEDEIKQVTVSLPKVQKFLEGKEPKKIILVPRKIVNILV</sequence>
<gene>
    <name evidence="1" type="primary">leuS</name>
    <name type="ordered locus">RC0585</name>
</gene>
<reference key="1">
    <citation type="journal article" date="2001" name="Science">
        <title>Mechanisms of evolution in Rickettsia conorii and R. prowazekii.</title>
        <authorList>
            <person name="Ogata H."/>
            <person name="Audic S."/>
            <person name="Renesto-Audiffren P."/>
            <person name="Fournier P.-E."/>
            <person name="Barbe V."/>
            <person name="Samson D."/>
            <person name="Roux V."/>
            <person name="Cossart P."/>
            <person name="Weissenbach J."/>
            <person name="Claverie J.-M."/>
            <person name="Raoult D."/>
        </authorList>
    </citation>
    <scope>NUCLEOTIDE SEQUENCE [LARGE SCALE GENOMIC DNA]</scope>
    <source>
        <strain>ATCC VR-613 / Malish 7</strain>
    </source>
</reference>
<keyword id="KW-0030">Aminoacyl-tRNA synthetase</keyword>
<keyword id="KW-0067">ATP-binding</keyword>
<keyword id="KW-0963">Cytoplasm</keyword>
<keyword id="KW-0436">Ligase</keyword>
<keyword id="KW-0547">Nucleotide-binding</keyword>
<keyword id="KW-0648">Protein biosynthesis</keyword>
<proteinExistence type="inferred from homology"/>
<comment type="catalytic activity">
    <reaction evidence="1">
        <text>tRNA(Leu) + L-leucine + ATP = L-leucyl-tRNA(Leu) + AMP + diphosphate</text>
        <dbReference type="Rhea" id="RHEA:11688"/>
        <dbReference type="Rhea" id="RHEA-COMP:9613"/>
        <dbReference type="Rhea" id="RHEA-COMP:9622"/>
        <dbReference type="ChEBI" id="CHEBI:30616"/>
        <dbReference type="ChEBI" id="CHEBI:33019"/>
        <dbReference type="ChEBI" id="CHEBI:57427"/>
        <dbReference type="ChEBI" id="CHEBI:78442"/>
        <dbReference type="ChEBI" id="CHEBI:78494"/>
        <dbReference type="ChEBI" id="CHEBI:456215"/>
        <dbReference type="EC" id="6.1.1.4"/>
    </reaction>
</comment>
<comment type="subcellular location">
    <subcellularLocation>
        <location evidence="1">Cytoplasm</location>
    </subcellularLocation>
</comment>
<comment type="similarity">
    <text evidence="1">Belongs to the class-I aminoacyl-tRNA synthetase family.</text>
</comment>
<feature type="chain" id="PRO_0000152074" description="Leucine--tRNA ligase">
    <location>
        <begin position="1"/>
        <end position="835"/>
    </location>
</feature>
<feature type="short sequence motif" description="'HIGH' region">
    <location>
        <begin position="36"/>
        <end position="46"/>
    </location>
</feature>
<feature type="short sequence motif" description="'KMSKS' region">
    <location>
        <begin position="602"/>
        <end position="606"/>
    </location>
</feature>
<feature type="binding site" evidence="1">
    <location>
        <position position="605"/>
    </location>
    <ligand>
        <name>ATP</name>
        <dbReference type="ChEBI" id="CHEBI:30616"/>
    </ligand>
</feature>
<protein>
    <recommendedName>
        <fullName evidence="1">Leucine--tRNA ligase</fullName>
        <ecNumber evidence="1">6.1.1.4</ecNumber>
    </recommendedName>
    <alternativeName>
        <fullName evidence="1">Leucyl-tRNA synthetase</fullName>
        <shortName evidence="1">LeuRS</shortName>
    </alternativeName>
</protein>